<protein>
    <recommendedName>
        <fullName evidence="1">Argininosuccinate synthase</fullName>
        <ecNumber evidence="1">6.3.4.5</ecNumber>
    </recommendedName>
    <alternativeName>
        <fullName evidence="1">Citrulline--aspartate ligase</fullName>
    </alternativeName>
</protein>
<comment type="catalytic activity">
    <reaction evidence="1">
        <text>L-citrulline + L-aspartate + ATP = 2-(N(omega)-L-arginino)succinate + AMP + diphosphate + H(+)</text>
        <dbReference type="Rhea" id="RHEA:10932"/>
        <dbReference type="ChEBI" id="CHEBI:15378"/>
        <dbReference type="ChEBI" id="CHEBI:29991"/>
        <dbReference type="ChEBI" id="CHEBI:30616"/>
        <dbReference type="ChEBI" id="CHEBI:33019"/>
        <dbReference type="ChEBI" id="CHEBI:57472"/>
        <dbReference type="ChEBI" id="CHEBI:57743"/>
        <dbReference type="ChEBI" id="CHEBI:456215"/>
        <dbReference type="EC" id="6.3.4.5"/>
    </reaction>
</comment>
<comment type="pathway">
    <text evidence="1">Amino-acid biosynthesis; L-arginine biosynthesis; L-arginine from L-ornithine and carbamoyl phosphate: step 2/3.</text>
</comment>
<comment type="subunit">
    <text evidence="1">Homotetramer.</text>
</comment>
<comment type="subcellular location">
    <subcellularLocation>
        <location evidence="1">Cytoplasm</location>
    </subcellularLocation>
</comment>
<comment type="similarity">
    <text evidence="1">Belongs to the argininosuccinate synthase family. Type 1 subfamily.</text>
</comment>
<name>ASSY_METBF</name>
<organism>
    <name type="scientific">Methanosarcina barkeri (strain Fusaro / DSM 804)</name>
    <dbReference type="NCBI Taxonomy" id="269797"/>
    <lineage>
        <taxon>Archaea</taxon>
        <taxon>Methanobacteriati</taxon>
        <taxon>Methanobacteriota</taxon>
        <taxon>Stenosarchaea group</taxon>
        <taxon>Methanomicrobia</taxon>
        <taxon>Methanosarcinales</taxon>
        <taxon>Methanosarcinaceae</taxon>
        <taxon>Methanosarcina</taxon>
    </lineage>
</organism>
<reference key="1">
    <citation type="journal article" date="2006" name="J. Bacteriol.">
        <title>The Methanosarcina barkeri genome: comparative analysis with Methanosarcina acetivorans and Methanosarcina mazei reveals extensive rearrangement within methanosarcinal genomes.</title>
        <authorList>
            <person name="Maeder D.L."/>
            <person name="Anderson I."/>
            <person name="Brettin T.S."/>
            <person name="Bruce D.C."/>
            <person name="Gilna P."/>
            <person name="Han C.S."/>
            <person name="Lapidus A."/>
            <person name="Metcalf W.W."/>
            <person name="Saunders E."/>
            <person name="Tapia R."/>
            <person name="Sowers K.R."/>
        </authorList>
    </citation>
    <scope>NUCLEOTIDE SEQUENCE [LARGE SCALE GENOMIC DNA]</scope>
    <source>
        <strain>Fusaro / DSM 804</strain>
    </source>
</reference>
<sequence length="395" mass="44281">MAKKVALAYSGGLDTSVCIPILKEKYGYDEVVTISVDVGQPEEEIKRADAKAEKISNKHYTIDAKEEFVKDYVFPLIKANGSYEGYVMGTSIARPLIAKKVVEAARKEGAVALAHGCTGKGNDQLRFEAVFRQTDMDVIAPMREMNLTREWEIDYAKEHGIPVEVTKSKPWSVDENIWSRSIEGGRLEDPSFVPPEEIFEWTTSPEKTPEQPRIVDIGFEAGVPVSLDGEKMSGYALVKKMNEIAGENGVGRTDMIEDRVLGLKARENYEHPAATVLLAAHADLEKLVLTRSELKFKKIVDDQWSELAYYGLVDEPLYADLNAFIDKSQERVTGTVKVRLYKGALTILSRSSPNALYSEDLVSFDSQTIDQKDSEGFAKYHGFQARMYRKVMDKQ</sequence>
<proteinExistence type="inferred from homology"/>
<dbReference type="EC" id="6.3.4.5" evidence="1"/>
<dbReference type="EMBL" id="CP000099">
    <property type="protein sequence ID" value="AAZ71294.1"/>
    <property type="molecule type" value="Genomic_DNA"/>
</dbReference>
<dbReference type="SMR" id="Q469Z8"/>
<dbReference type="STRING" id="269797.Mbar_A2373"/>
<dbReference type="PaxDb" id="269797-Mbar_A2373"/>
<dbReference type="KEGG" id="mba:Mbar_A2373"/>
<dbReference type="eggNOG" id="arCOG00112">
    <property type="taxonomic scope" value="Archaea"/>
</dbReference>
<dbReference type="HOGENOM" id="CLU_032784_4_0_2"/>
<dbReference type="OrthoDB" id="5877at2157"/>
<dbReference type="UniPathway" id="UPA00068">
    <property type="reaction ID" value="UER00113"/>
</dbReference>
<dbReference type="GO" id="GO:0005737">
    <property type="term" value="C:cytoplasm"/>
    <property type="evidence" value="ECO:0007669"/>
    <property type="project" value="UniProtKB-SubCell"/>
</dbReference>
<dbReference type="GO" id="GO:0004055">
    <property type="term" value="F:argininosuccinate synthase activity"/>
    <property type="evidence" value="ECO:0007669"/>
    <property type="project" value="UniProtKB-UniRule"/>
</dbReference>
<dbReference type="GO" id="GO:0005524">
    <property type="term" value="F:ATP binding"/>
    <property type="evidence" value="ECO:0007669"/>
    <property type="project" value="UniProtKB-UniRule"/>
</dbReference>
<dbReference type="GO" id="GO:0000053">
    <property type="term" value="P:argininosuccinate metabolic process"/>
    <property type="evidence" value="ECO:0007669"/>
    <property type="project" value="TreeGrafter"/>
</dbReference>
<dbReference type="GO" id="GO:0006526">
    <property type="term" value="P:L-arginine biosynthetic process"/>
    <property type="evidence" value="ECO:0007669"/>
    <property type="project" value="UniProtKB-UniRule"/>
</dbReference>
<dbReference type="GO" id="GO:0000050">
    <property type="term" value="P:urea cycle"/>
    <property type="evidence" value="ECO:0007669"/>
    <property type="project" value="TreeGrafter"/>
</dbReference>
<dbReference type="CDD" id="cd01999">
    <property type="entry name" value="ASS"/>
    <property type="match status" value="1"/>
</dbReference>
<dbReference type="FunFam" id="3.40.50.620:FF:000019">
    <property type="entry name" value="Argininosuccinate synthase"/>
    <property type="match status" value="1"/>
</dbReference>
<dbReference type="FunFam" id="3.90.1260.10:FF:000007">
    <property type="entry name" value="Argininosuccinate synthase"/>
    <property type="match status" value="1"/>
</dbReference>
<dbReference type="Gene3D" id="3.90.1260.10">
    <property type="entry name" value="Argininosuccinate synthetase, chain A, domain 2"/>
    <property type="match status" value="1"/>
</dbReference>
<dbReference type="Gene3D" id="3.40.50.620">
    <property type="entry name" value="HUPs"/>
    <property type="match status" value="1"/>
</dbReference>
<dbReference type="HAMAP" id="MF_00005">
    <property type="entry name" value="Arg_succ_synth_type1"/>
    <property type="match status" value="1"/>
</dbReference>
<dbReference type="InterPro" id="IPR048268">
    <property type="entry name" value="Arginosuc_syn_C"/>
</dbReference>
<dbReference type="InterPro" id="IPR048267">
    <property type="entry name" value="Arginosuc_syn_N"/>
</dbReference>
<dbReference type="InterPro" id="IPR001518">
    <property type="entry name" value="Arginosuc_synth"/>
</dbReference>
<dbReference type="InterPro" id="IPR018223">
    <property type="entry name" value="Arginosuc_synth_CS"/>
</dbReference>
<dbReference type="InterPro" id="IPR023434">
    <property type="entry name" value="Arginosuc_synth_type_1_subfam"/>
</dbReference>
<dbReference type="InterPro" id="IPR024074">
    <property type="entry name" value="AS_cat/multimer_dom_body"/>
</dbReference>
<dbReference type="InterPro" id="IPR014729">
    <property type="entry name" value="Rossmann-like_a/b/a_fold"/>
</dbReference>
<dbReference type="NCBIfam" id="TIGR00032">
    <property type="entry name" value="argG"/>
    <property type="match status" value="1"/>
</dbReference>
<dbReference type="NCBIfam" id="NF001770">
    <property type="entry name" value="PRK00509.1"/>
    <property type="match status" value="1"/>
</dbReference>
<dbReference type="NCBIfam" id="NF010392">
    <property type="entry name" value="PRK13820.1"/>
    <property type="match status" value="1"/>
</dbReference>
<dbReference type="PANTHER" id="PTHR11587">
    <property type="entry name" value="ARGININOSUCCINATE SYNTHASE"/>
    <property type="match status" value="1"/>
</dbReference>
<dbReference type="PANTHER" id="PTHR11587:SF2">
    <property type="entry name" value="ARGININOSUCCINATE SYNTHASE"/>
    <property type="match status" value="1"/>
</dbReference>
<dbReference type="Pfam" id="PF20979">
    <property type="entry name" value="Arginosuc_syn_C"/>
    <property type="match status" value="1"/>
</dbReference>
<dbReference type="Pfam" id="PF00764">
    <property type="entry name" value="Arginosuc_synth"/>
    <property type="match status" value="1"/>
</dbReference>
<dbReference type="SUPFAM" id="SSF52402">
    <property type="entry name" value="Adenine nucleotide alpha hydrolases-like"/>
    <property type="match status" value="1"/>
</dbReference>
<dbReference type="SUPFAM" id="SSF69864">
    <property type="entry name" value="Argininosuccinate synthetase, C-terminal domain"/>
    <property type="match status" value="1"/>
</dbReference>
<dbReference type="PROSITE" id="PS00564">
    <property type="entry name" value="ARGININOSUCCIN_SYN_1"/>
    <property type="match status" value="1"/>
</dbReference>
<dbReference type="PROSITE" id="PS00565">
    <property type="entry name" value="ARGININOSUCCIN_SYN_2"/>
    <property type="match status" value="1"/>
</dbReference>
<feature type="chain" id="PRO_0000263995" description="Argininosuccinate synthase">
    <location>
        <begin position="1"/>
        <end position="395"/>
    </location>
</feature>
<feature type="binding site" evidence="1">
    <location>
        <begin position="8"/>
        <end position="16"/>
    </location>
    <ligand>
        <name>ATP</name>
        <dbReference type="ChEBI" id="CHEBI:30616"/>
    </ligand>
</feature>
<feature type="binding site" evidence="1">
    <location>
        <position position="86"/>
    </location>
    <ligand>
        <name>L-citrulline</name>
        <dbReference type="ChEBI" id="CHEBI:57743"/>
    </ligand>
</feature>
<feature type="binding site" evidence="1">
    <location>
        <position position="91"/>
    </location>
    <ligand>
        <name>L-citrulline</name>
        <dbReference type="ChEBI" id="CHEBI:57743"/>
    </ligand>
</feature>
<feature type="binding site" evidence="1">
    <location>
        <position position="116"/>
    </location>
    <ligand>
        <name>ATP</name>
        <dbReference type="ChEBI" id="CHEBI:30616"/>
    </ligand>
</feature>
<feature type="binding site" evidence="1">
    <location>
        <position position="118"/>
    </location>
    <ligand>
        <name>L-aspartate</name>
        <dbReference type="ChEBI" id="CHEBI:29991"/>
    </ligand>
</feature>
<feature type="binding site" evidence="1">
    <location>
        <position position="122"/>
    </location>
    <ligand>
        <name>L-aspartate</name>
        <dbReference type="ChEBI" id="CHEBI:29991"/>
    </ligand>
</feature>
<feature type="binding site" evidence="1">
    <location>
        <position position="122"/>
    </location>
    <ligand>
        <name>L-citrulline</name>
        <dbReference type="ChEBI" id="CHEBI:57743"/>
    </ligand>
</feature>
<feature type="binding site" evidence="1">
    <location>
        <position position="123"/>
    </location>
    <ligand>
        <name>L-aspartate</name>
        <dbReference type="ChEBI" id="CHEBI:29991"/>
    </ligand>
</feature>
<feature type="binding site" evidence="1">
    <location>
        <position position="126"/>
    </location>
    <ligand>
        <name>L-citrulline</name>
        <dbReference type="ChEBI" id="CHEBI:57743"/>
    </ligand>
</feature>
<feature type="binding site" evidence="1">
    <location>
        <position position="172"/>
    </location>
    <ligand>
        <name>L-citrulline</name>
        <dbReference type="ChEBI" id="CHEBI:57743"/>
    </ligand>
</feature>
<feature type="binding site" evidence="1">
    <location>
        <position position="181"/>
    </location>
    <ligand>
        <name>L-citrulline</name>
        <dbReference type="ChEBI" id="CHEBI:57743"/>
    </ligand>
</feature>
<feature type="binding site" evidence="1">
    <location>
        <position position="257"/>
    </location>
    <ligand>
        <name>L-citrulline</name>
        <dbReference type="ChEBI" id="CHEBI:57743"/>
    </ligand>
</feature>
<feature type="binding site" evidence="1">
    <location>
        <position position="269"/>
    </location>
    <ligand>
        <name>L-citrulline</name>
        <dbReference type="ChEBI" id="CHEBI:57743"/>
    </ligand>
</feature>
<keyword id="KW-0028">Amino-acid biosynthesis</keyword>
<keyword id="KW-0055">Arginine biosynthesis</keyword>
<keyword id="KW-0067">ATP-binding</keyword>
<keyword id="KW-0963">Cytoplasm</keyword>
<keyword id="KW-0436">Ligase</keyword>
<keyword id="KW-0547">Nucleotide-binding</keyword>
<accession>Q469Z8</accession>
<evidence type="ECO:0000255" key="1">
    <source>
        <dbReference type="HAMAP-Rule" id="MF_00005"/>
    </source>
</evidence>
<gene>
    <name evidence="1" type="primary">argG</name>
    <name type="ordered locus">Mbar_A2373</name>
</gene>